<name>RL18_PARC0</name>
<accession>A1TJT3</accession>
<organism>
    <name type="scientific">Paracidovorax citrulli (strain AAC00-1)</name>
    <name type="common">Acidovorax citrulli</name>
    <dbReference type="NCBI Taxonomy" id="397945"/>
    <lineage>
        <taxon>Bacteria</taxon>
        <taxon>Pseudomonadati</taxon>
        <taxon>Pseudomonadota</taxon>
        <taxon>Betaproteobacteria</taxon>
        <taxon>Burkholderiales</taxon>
        <taxon>Comamonadaceae</taxon>
        <taxon>Paracidovorax</taxon>
    </lineage>
</organism>
<sequence length="121" mass="13020">MLTKKEQRLRRSRQTRIRIAQQGVVRLTVNRTNLHIYASVISEDGSRVLASASTAEAEVRKELGGSGKGGNAAAAQMIGKRIAEKAKAAGIEKVAFDRAGFAYHGRVKALAEAAREAGLQF</sequence>
<comment type="function">
    <text evidence="1">This is one of the proteins that bind and probably mediate the attachment of the 5S RNA into the large ribosomal subunit, where it forms part of the central protuberance.</text>
</comment>
<comment type="subunit">
    <text evidence="1">Part of the 50S ribosomal subunit; part of the 5S rRNA/L5/L18/L25 subcomplex. Contacts the 5S and 23S rRNAs.</text>
</comment>
<comment type="similarity">
    <text evidence="1">Belongs to the universal ribosomal protein uL18 family.</text>
</comment>
<keyword id="KW-0687">Ribonucleoprotein</keyword>
<keyword id="KW-0689">Ribosomal protein</keyword>
<keyword id="KW-0694">RNA-binding</keyword>
<keyword id="KW-0699">rRNA-binding</keyword>
<evidence type="ECO:0000255" key="1">
    <source>
        <dbReference type="HAMAP-Rule" id="MF_01337"/>
    </source>
</evidence>
<evidence type="ECO:0000305" key="2"/>
<gene>
    <name evidence="1" type="primary">rplR</name>
    <name type="ordered locus">Aave_0617</name>
</gene>
<feature type="chain" id="PRO_1000052977" description="Large ribosomal subunit protein uL18">
    <location>
        <begin position="1"/>
        <end position="121"/>
    </location>
</feature>
<protein>
    <recommendedName>
        <fullName evidence="1">Large ribosomal subunit protein uL18</fullName>
    </recommendedName>
    <alternativeName>
        <fullName evidence="2">50S ribosomal protein L18</fullName>
    </alternativeName>
</protein>
<reference key="1">
    <citation type="submission" date="2006-12" db="EMBL/GenBank/DDBJ databases">
        <title>Complete sequence of Acidovorax avenae subsp. citrulli AAC00-1.</title>
        <authorList>
            <person name="Copeland A."/>
            <person name="Lucas S."/>
            <person name="Lapidus A."/>
            <person name="Barry K."/>
            <person name="Detter J.C."/>
            <person name="Glavina del Rio T."/>
            <person name="Dalin E."/>
            <person name="Tice H."/>
            <person name="Pitluck S."/>
            <person name="Kiss H."/>
            <person name="Brettin T."/>
            <person name="Bruce D."/>
            <person name="Han C."/>
            <person name="Tapia R."/>
            <person name="Gilna P."/>
            <person name="Schmutz J."/>
            <person name="Larimer F."/>
            <person name="Land M."/>
            <person name="Hauser L."/>
            <person name="Kyrpides N."/>
            <person name="Kim E."/>
            <person name="Stahl D."/>
            <person name="Richardson P."/>
        </authorList>
    </citation>
    <scope>NUCLEOTIDE SEQUENCE [LARGE SCALE GENOMIC DNA]</scope>
    <source>
        <strain>AAC00-1</strain>
    </source>
</reference>
<dbReference type="EMBL" id="CP000512">
    <property type="protein sequence ID" value="ABM31221.1"/>
    <property type="molecule type" value="Genomic_DNA"/>
</dbReference>
<dbReference type="RefSeq" id="WP_011793792.1">
    <property type="nucleotide sequence ID" value="NC_008752.1"/>
</dbReference>
<dbReference type="SMR" id="A1TJT3"/>
<dbReference type="STRING" id="397945.Aave_0617"/>
<dbReference type="GeneID" id="79790331"/>
<dbReference type="KEGG" id="aav:Aave_0617"/>
<dbReference type="eggNOG" id="COG0256">
    <property type="taxonomic scope" value="Bacteria"/>
</dbReference>
<dbReference type="HOGENOM" id="CLU_098841_0_1_4"/>
<dbReference type="OrthoDB" id="9810939at2"/>
<dbReference type="Proteomes" id="UP000002596">
    <property type="component" value="Chromosome"/>
</dbReference>
<dbReference type="GO" id="GO:0022625">
    <property type="term" value="C:cytosolic large ribosomal subunit"/>
    <property type="evidence" value="ECO:0007669"/>
    <property type="project" value="TreeGrafter"/>
</dbReference>
<dbReference type="GO" id="GO:0008097">
    <property type="term" value="F:5S rRNA binding"/>
    <property type="evidence" value="ECO:0007669"/>
    <property type="project" value="TreeGrafter"/>
</dbReference>
<dbReference type="GO" id="GO:0003735">
    <property type="term" value="F:structural constituent of ribosome"/>
    <property type="evidence" value="ECO:0007669"/>
    <property type="project" value="InterPro"/>
</dbReference>
<dbReference type="GO" id="GO:0006412">
    <property type="term" value="P:translation"/>
    <property type="evidence" value="ECO:0007669"/>
    <property type="project" value="UniProtKB-UniRule"/>
</dbReference>
<dbReference type="CDD" id="cd00432">
    <property type="entry name" value="Ribosomal_L18_L5e"/>
    <property type="match status" value="1"/>
</dbReference>
<dbReference type="FunFam" id="3.30.420.100:FF:000001">
    <property type="entry name" value="50S ribosomal protein L18"/>
    <property type="match status" value="1"/>
</dbReference>
<dbReference type="Gene3D" id="3.30.420.100">
    <property type="match status" value="1"/>
</dbReference>
<dbReference type="HAMAP" id="MF_01337_B">
    <property type="entry name" value="Ribosomal_uL18_B"/>
    <property type="match status" value="1"/>
</dbReference>
<dbReference type="InterPro" id="IPR004389">
    <property type="entry name" value="Ribosomal_uL18_bac-type"/>
</dbReference>
<dbReference type="InterPro" id="IPR005484">
    <property type="entry name" value="Ribosomal_uL18_bac/euk"/>
</dbReference>
<dbReference type="NCBIfam" id="TIGR00060">
    <property type="entry name" value="L18_bact"/>
    <property type="match status" value="1"/>
</dbReference>
<dbReference type="PANTHER" id="PTHR12899">
    <property type="entry name" value="39S RIBOSOMAL PROTEIN L18, MITOCHONDRIAL"/>
    <property type="match status" value="1"/>
</dbReference>
<dbReference type="PANTHER" id="PTHR12899:SF3">
    <property type="entry name" value="LARGE RIBOSOMAL SUBUNIT PROTEIN UL18M"/>
    <property type="match status" value="1"/>
</dbReference>
<dbReference type="Pfam" id="PF00861">
    <property type="entry name" value="Ribosomal_L18p"/>
    <property type="match status" value="1"/>
</dbReference>
<dbReference type="SUPFAM" id="SSF53137">
    <property type="entry name" value="Translational machinery components"/>
    <property type="match status" value="1"/>
</dbReference>
<proteinExistence type="inferred from homology"/>